<organism>
    <name type="scientific">Thermosynechococcus vestitus (strain NIES-2133 / IAM M-273 / BP-1)</name>
    <dbReference type="NCBI Taxonomy" id="197221"/>
    <lineage>
        <taxon>Bacteria</taxon>
        <taxon>Bacillati</taxon>
        <taxon>Cyanobacteriota</taxon>
        <taxon>Cyanophyceae</taxon>
        <taxon>Acaryochloridales</taxon>
        <taxon>Thermosynechococcaceae</taxon>
        <taxon>Thermosynechococcus</taxon>
    </lineage>
</organism>
<comment type="similarity">
    <text evidence="1">Belongs to the bacterial ribosomal protein bS21 family.</text>
</comment>
<evidence type="ECO:0000255" key="1">
    <source>
        <dbReference type="HAMAP-Rule" id="MF_00358"/>
    </source>
</evidence>
<evidence type="ECO:0000256" key="2">
    <source>
        <dbReference type="SAM" id="MobiDB-lite"/>
    </source>
</evidence>
<evidence type="ECO:0000305" key="3"/>
<proteinExistence type="inferred from homology"/>
<gene>
    <name evidence="1" type="primary">rpsU</name>
    <name evidence="1" type="synonym">rps21</name>
    <name type="ordered locus">tsl0038</name>
</gene>
<sequence>MAEVRLGENESIESALRRFKKKIQKAGILSEVKRRERYEKPSLRRKRKQEAARKRNR</sequence>
<dbReference type="EMBL" id="BA000039">
    <property type="protein sequence ID" value="BAC07591.1"/>
    <property type="molecule type" value="Genomic_DNA"/>
</dbReference>
<dbReference type="RefSeq" id="NP_680829.1">
    <property type="nucleotide sequence ID" value="NC_004113.1"/>
</dbReference>
<dbReference type="RefSeq" id="WP_011055893.1">
    <property type="nucleotide sequence ID" value="NC_004113.1"/>
</dbReference>
<dbReference type="SMR" id="Q8DMS3"/>
<dbReference type="STRING" id="197221.gene:10746616"/>
<dbReference type="EnsemblBacteria" id="BAC07591">
    <property type="protein sequence ID" value="BAC07591"/>
    <property type="gene ID" value="BAC07591"/>
</dbReference>
<dbReference type="KEGG" id="tel:tsl0038"/>
<dbReference type="PATRIC" id="fig|197221.4.peg.37"/>
<dbReference type="eggNOG" id="COG0828">
    <property type="taxonomic scope" value="Bacteria"/>
</dbReference>
<dbReference type="Proteomes" id="UP000000440">
    <property type="component" value="Chromosome"/>
</dbReference>
<dbReference type="GO" id="GO:1990904">
    <property type="term" value="C:ribonucleoprotein complex"/>
    <property type="evidence" value="ECO:0007669"/>
    <property type="project" value="UniProtKB-KW"/>
</dbReference>
<dbReference type="GO" id="GO:0005840">
    <property type="term" value="C:ribosome"/>
    <property type="evidence" value="ECO:0007669"/>
    <property type="project" value="UniProtKB-KW"/>
</dbReference>
<dbReference type="GO" id="GO:0003735">
    <property type="term" value="F:structural constituent of ribosome"/>
    <property type="evidence" value="ECO:0007669"/>
    <property type="project" value="InterPro"/>
</dbReference>
<dbReference type="GO" id="GO:0006412">
    <property type="term" value="P:translation"/>
    <property type="evidence" value="ECO:0007669"/>
    <property type="project" value="UniProtKB-UniRule"/>
</dbReference>
<dbReference type="Gene3D" id="1.20.5.1150">
    <property type="entry name" value="Ribosomal protein S8"/>
    <property type="match status" value="1"/>
</dbReference>
<dbReference type="HAMAP" id="MF_00358">
    <property type="entry name" value="Ribosomal_bS21"/>
    <property type="match status" value="1"/>
</dbReference>
<dbReference type="InterPro" id="IPR001911">
    <property type="entry name" value="Ribosomal_bS21"/>
</dbReference>
<dbReference type="InterPro" id="IPR018278">
    <property type="entry name" value="Ribosomal_bS21_CS"/>
</dbReference>
<dbReference type="InterPro" id="IPR038380">
    <property type="entry name" value="Ribosomal_bS21_sf"/>
</dbReference>
<dbReference type="NCBIfam" id="TIGR00030">
    <property type="entry name" value="S21p"/>
    <property type="match status" value="1"/>
</dbReference>
<dbReference type="PANTHER" id="PTHR21109">
    <property type="entry name" value="MITOCHONDRIAL 28S RIBOSOMAL PROTEIN S21"/>
    <property type="match status" value="1"/>
</dbReference>
<dbReference type="PANTHER" id="PTHR21109:SF22">
    <property type="entry name" value="SMALL RIBOSOMAL SUBUNIT PROTEIN BS21"/>
    <property type="match status" value="1"/>
</dbReference>
<dbReference type="Pfam" id="PF01165">
    <property type="entry name" value="Ribosomal_S21"/>
    <property type="match status" value="1"/>
</dbReference>
<dbReference type="PRINTS" id="PR00976">
    <property type="entry name" value="RIBOSOMALS21"/>
</dbReference>
<dbReference type="PROSITE" id="PS01181">
    <property type="entry name" value="RIBOSOMAL_S21"/>
    <property type="match status" value="1"/>
</dbReference>
<name>RS21_THEVB</name>
<feature type="chain" id="PRO_0000178391" description="Small ribosomal subunit protein bS21">
    <location>
        <begin position="1"/>
        <end position="57"/>
    </location>
</feature>
<feature type="region of interest" description="Disordered" evidence="2">
    <location>
        <begin position="35"/>
        <end position="57"/>
    </location>
</feature>
<accession>Q8DMS3</accession>
<protein>
    <recommendedName>
        <fullName evidence="1">Small ribosomal subunit protein bS21</fullName>
    </recommendedName>
    <alternativeName>
        <fullName evidence="3">30S ribosomal protein S21</fullName>
    </alternativeName>
</protein>
<reference key="1">
    <citation type="journal article" date="2002" name="DNA Res.">
        <title>Complete genome structure of the thermophilic cyanobacterium Thermosynechococcus elongatus BP-1.</title>
        <authorList>
            <person name="Nakamura Y."/>
            <person name="Kaneko T."/>
            <person name="Sato S."/>
            <person name="Ikeuchi M."/>
            <person name="Katoh H."/>
            <person name="Sasamoto S."/>
            <person name="Watanabe A."/>
            <person name="Iriguchi M."/>
            <person name="Kawashima K."/>
            <person name="Kimura T."/>
            <person name="Kishida Y."/>
            <person name="Kiyokawa C."/>
            <person name="Kohara M."/>
            <person name="Matsumoto M."/>
            <person name="Matsuno A."/>
            <person name="Nakazaki N."/>
            <person name="Shimpo S."/>
            <person name="Sugimoto M."/>
            <person name="Takeuchi C."/>
            <person name="Yamada M."/>
            <person name="Tabata S."/>
        </authorList>
    </citation>
    <scope>NUCLEOTIDE SEQUENCE [LARGE SCALE GENOMIC DNA]</scope>
    <source>
        <strain>NIES-2133 / IAM M-273 / BP-1</strain>
    </source>
</reference>
<keyword id="KW-1185">Reference proteome</keyword>
<keyword id="KW-0687">Ribonucleoprotein</keyword>
<keyword id="KW-0689">Ribosomal protein</keyword>